<accession>P9WJQ9</accession>
<accession>L0T9V2</accession>
<accession>O53180</accession>
<accession>P65402</accession>
<feature type="chain" id="PRO_0000134894" description="Probable molybdenum cofactor guanylyltransferase">
    <location>
        <begin position="1"/>
        <end position="201"/>
    </location>
</feature>
<feature type="binding site" evidence="1">
    <location>
        <begin position="16"/>
        <end position="18"/>
    </location>
    <ligand>
        <name>GTP</name>
        <dbReference type="ChEBI" id="CHEBI:37565"/>
    </ligand>
</feature>
<feature type="binding site" evidence="1">
    <location>
        <position position="28"/>
    </location>
    <ligand>
        <name>GTP</name>
        <dbReference type="ChEBI" id="CHEBI:37565"/>
    </ligand>
</feature>
<feature type="binding site" evidence="1">
    <location>
        <position position="75"/>
    </location>
    <ligand>
        <name>GTP</name>
        <dbReference type="ChEBI" id="CHEBI:37565"/>
    </ligand>
</feature>
<feature type="binding site" evidence="1">
    <location>
        <position position="107"/>
    </location>
    <ligand>
        <name>GTP</name>
        <dbReference type="ChEBI" id="CHEBI:37565"/>
    </ligand>
</feature>
<feature type="binding site" evidence="1">
    <location>
        <position position="107"/>
    </location>
    <ligand>
        <name>Mg(2+)</name>
        <dbReference type="ChEBI" id="CHEBI:18420"/>
    </ligand>
</feature>
<keyword id="KW-0963">Cytoplasm</keyword>
<keyword id="KW-0342">GTP-binding</keyword>
<keyword id="KW-0460">Magnesium</keyword>
<keyword id="KW-0479">Metal-binding</keyword>
<keyword id="KW-0501">Molybdenum cofactor biosynthesis</keyword>
<keyword id="KW-0547">Nucleotide-binding</keyword>
<keyword id="KW-1185">Reference proteome</keyword>
<keyword id="KW-0808">Transferase</keyword>
<gene>
    <name evidence="1" type="primary">mobA</name>
    <name type="ordered locus">Rv2453c</name>
    <name type="ORF">MTV008.09c</name>
</gene>
<dbReference type="EC" id="2.7.7.77" evidence="1"/>
<dbReference type="EMBL" id="AL123456">
    <property type="protein sequence ID" value="CCP45246.1"/>
    <property type="molecule type" value="Genomic_DNA"/>
</dbReference>
<dbReference type="PIR" id="D70864">
    <property type="entry name" value="D70864"/>
</dbReference>
<dbReference type="RefSeq" id="NP_216969.1">
    <property type="nucleotide sequence ID" value="NC_000962.3"/>
</dbReference>
<dbReference type="RefSeq" id="WP_003412618.1">
    <property type="nucleotide sequence ID" value="NZ_NVQJ01000024.1"/>
</dbReference>
<dbReference type="SMR" id="P9WJQ9"/>
<dbReference type="STRING" id="83332.Rv2453c"/>
<dbReference type="PaxDb" id="83332-Rv2453c"/>
<dbReference type="DNASU" id="885904"/>
<dbReference type="GeneID" id="45426443"/>
<dbReference type="GeneID" id="885904"/>
<dbReference type="KEGG" id="mtu:Rv2453c"/>
<dbReference type="KEGG" id="mtv:RVBD_2453c"/>
<dbReference type="TubercuList" id="Rv2453c"/>
<dbReference type="eggNOG" id="COG0746">
    <property type="taxonomic scope" value="Bacteria"/>
</dbReference>
<dbReference type="InParanoid" id="P9WJQ9"/>
<dbReference type="OrthoDB" id="9788394at2"/>
<dbReference type="PhylomeDB" id="P9WJQ9"/>
<dbReference type="Proteomes" id="UP000001584">
    <property type="component" value="Chromosome"/>
</dbReference>
<dbReference type="GO" id="GO:0005737">
    <property type="term" value="C:cytoplasm"/>
    <property type="evidence" value="ECO:0007669"/>
    <property type="project" value="UniProtKB-SubCell"/>
</dbReference>
<dbReference type="GO" id="GO:0005886">
    <property type="term" value="C:plasma membrane"/>
    <property type="evidence" value="ECO:0007005"/>
    <property type="project" value="MTBBASE"/>
</dbReference>
<dbReference type="GO" id="GO:0005525">
    <property type="term" value="F:GTP binding"/>
    <property type="evidence" value="ECO:0007669"/>
    <property type="project" value="UniProtKB-UniRule"/>
</dbReference>
<dbReference type="GO" id="GO:0046872">
    <property type="term" value="F:metal ion binding"/>
    <property type="evidence" value="ECO:0007669"/>
    <property type="project" value="UniProtKB-KW"/>
</dbReference>
<dbReference type="GO" id="GO:0061603">
    <property type="term" value="F:molybdenum cofactor guanylyltransferase activity"/>
    <property type="evidence" value="ECO:0007669"/>
    <property type="project" value="UniProtKB-EC"/>
</dbReference>
<dbReference type="GO" id="GO:0016779">
    <property type="term" value="F:nucleotidyltransferase activity"/>
    <property type="evidence" value="ECO:0000318"/>
    <property type="project" value="GO_Central"/>
</dbReference>
<dbReference type="GO" id="GO:0006777">
    <property type="term" value="P:Mo-molybdopterin cofactor biosynthetic process"/>
    <property type="evidence" value="ECO:0007669"/>
    <property type="project" value="UniProtKB-KW"/>
</dbReference>
<dbReference type="CDD" id="cd02503">
    <property type="entry name" value="MobA"/>
    <property type="match status" value="1"/>
</dbReference>
<dbReference type="Gene3D" id="3.90.550.10">
    <property type="entry name" value="Spore Coat Polysaccharide Biosynthesis Protein SpsA, Chain A"/>
    <property type="match status" value="1"/>
</dbReference>
<dbReference type="HAMAP" id="MF_00316">
    <property type="entry name" value="MobA"/>
    <property type="match status" value="1"/>
</dbReference>
<dbReference type="InterPro" id="IPR025877">
    <property type="entry name" value="MobA-like_NTP_Trfase"/>
</dbReference>
<dbReference type="InterPro" id="IPR013482">
    <property type="entry name" value="Molybde_CF_guanTrfase"/>
</dbReference>
<dbReference type="InterPro" id="IPR029044">
    <property type="entry name" value="Nucleotide-diphossugar_trans"/>
</dbReference>
<dbReference type="NCBIfam" id="NF001855">
    <property type="entry name" value="PRK00576.1"/>
    <property type="match status" value="1"/>
</dbReference>
<dbReference type="PANTHER" id="PTHR19136">
    <property type="entry name" value="MOLYBDENUM COFACTOR GUANYLYLTRANSFERASE"/>
    <property type="match status" value="1"/>
</dbReference>
<dbReference type="PANTHER" id="PTHR19136:SF81">
    <property type="entry name" value="MOLYBDENUM COFACTOR GUANYLYLTRANSFERASE"/>
    <property type="match status" value="1"/>
</dbReference>
<dbReference type="Pfam" id="PF12804">
    <property type="entry name" value="NTP_transf_3"/>
    <property type="match status" value="1"/>
</dbReference>
<dbReference type="SUPFAM" id="SSF53448">
    <property type="entry name" value="Nucleotide-diphospho-sugar transferases"/>
    <property type="match status" value="1"/>
</dbReference>
<name>MOBA_MYCTU</name>
<proteinExistence type="evidence at protein level"/>
<reference key="1">
    <citation type="journal article" date="1998" name="Nature">
        <title>Deciphering the biology of Mycobacterium tuberculosis from the complete genome sequence.</title>
        <authorList>
            <person name="Cole S.T."/>
            <person name="Brosch R."/>
            <person name="Parkhill J."/>
            <person name="Garnier T."/>
            <person name="Churcher C.M."/>
            <person name="Harris D.E."/>
            <person name="Gordon S.V."/>
            <person name="Eiglmeier K."/>
            <person name="Gas S."/>
            <person name="Barry C.E. III"/>
            <person name="Tekaia F."/>
            <person name="Badcock K."/>
            <person name="Basham D."/>
            <person name="Brown D."/>
            <person name="Chillingworth T."/>
            <person name="Connor R."/>
            <person name="Davies R.M."/>
            <person name="Devlin K."/>
            <person name="Feltwell T."/>
            <person name="Gentles S."/>
            <person name="Hamlin N."/>
            <person name="Holroyd S."/>
            <person name="Hornsby T."/>
            <person name="Jagels K."/>
            <person name="Krogh A."/>
            <person name="McLean J."/>
            <person name="Moule S."/>
            <person name="Murphy L.D."/>
            <person name="Oliver S."/>
            <person name="Osborne J."/>
            <person name="Quail M.A."/>
            <person name="Rajandream M.A."/>
            <person name="Rogers J."/>
            <person name="Rutter S."/>
            <person name="Seeger K."/>
            <person name="Skelton S."/>
            <person name="Squares S."/>
            <person name="Squares R."/>
            <person name="Sulston J.E."/>
            <person name="Taylor K."/>
            <person name="Whitehead S."/>
            <person name="Barrell B.G."/>
        </authorList>
    </citation>
    <scope>NUCLEOTIDE SEQUENCE [LARGE SCALE GENOMIC DNA]</scope>
    <source>
        <strain>ATCC 25618 / H37Rv</strain>
    </source>
</reference>
<reference key="2">
    <citation type="journal article" date="2011" name="Mol. Cell. Proteomics">
        <title>Proteogenomic analysis of Mycobacterium tuberculosis by high resolution mass spectrometry.</title>
        <authorList>
            <person name="Kelkar D.S."/>
            <person name="Kumar D."/>
            <person name="Kumar P."/>
            <person name="Balakrishnan L."/>
            <person name="Muthusamy B."/>
            <person name="Yadav A.K."/>
            <person name="Shrivastava P."/>
            <person name="Marimuthu A."/>
            <person name="Anand S."/>
            <person name="Sundaram H."/>
            <person name="Kingsbury R."/>
            <person name="Harsha H.C."/>
            <person name="Nair B."/>
            <person name="Prasad T.S."/>
            <person name="Chauhan D.S."/>
            <person name="Katoch K."/>
            <person name="Katoch V.M."/>
            <person name="Kumar P."/>
            <person name="Chaerkady R."/>
            <person name="Ramachandran S."/>
            <person name="Dash D."/>
            <person name="Pandey A."/>
        </authorList>
    </citation>
    <scope>IDENTIFICATION BY MASS SPECTROMETRY [LARGE SCALE ANALYSIS]</scope>
    <source>
        <strain>ATCC 25618 / H37Rv</strain>
    </source>
</reference>
<organism>
    <name type="scientific">Mycobacterium tuberculosis (strain ATCC 25618 / H37Rv)</name>
    <dbReference type="NCBI Taxonomy" id="83332"/>
    <lineage>
        <taxon>Bacteria</taxon>
        <taxon>Bacillati</taxon>
        <taxon>Actinomycetota</taxon>
        <taxon>Actinomycetes</taxon>
        <taxon>Mycobacteriales</taxon>
        <taxon>Mycobacteriaceae</taxon>
        <taxon>Mycobacterium</taxon>
        <taxon>Mycobacterium tuberculosis complex</taxon>
    </lineage>
</organism>
<protein>
    <recommendedName>
        <fullName evidence="1">Probable molybdenum cofactor guanylyltransferase</fullName>
        <shortName evidence="1">MoCo guanylyltransferase</shortName>
        <ecNumber evidence="1">2.7.7.77</ecNumber>
    </recommendedName>
    <alternativeName>
        <fullName evidence="1">GTP:molybdopterin guanylyltransferase</fullName>
    </alternativeName>
    <alternativeName>
        <fullName evidence="1">Mo-MPT guanylyltransferase</fullName>
    </alternativeName>
    <alternativeName>
        <fullName evidence="1">Molybdopterin guanylyltransferase</fullName>
    </alternativeName>
    <alternativeName>
        <fullName evidence="1">Molybdopterin-guanine dinucleotide synthase</fullName>
        <shortName evidence="1">MGD synthase</shortName>
    </alternativeName>
</protein>
<comment type="function">
    <text evidence="1">Transfers a GMP moiety from GTP to Mo-molybdopterin (Mo-MPT) cofactor (Moco or molybdenum cofactor) to form Mo-molybdopterin guanine dinucleotide (Mo-MGD) cofactor.</text>
</comment>
<comment type="catalytic activity">
    <reaction evidence="1">
        <text>Mo-molybdopterin + GTP + H(+) = Mo-molybdopterin guanine dinucleotide + diphosphate</text>
        <dbReference type="Rhea" id="RHEA:34243"/>
        <dbReference type="ChEBI" id="CHEBI:15378"/>
        <dbReference type="ChEBI" id="CHEBI:33019"/>
        <dbReference type="ChEBI" id="CHEBI:37565"/>
        <dbReference type="ChEBI" id="CHEBI:71302"/>
        <dbReference type="ChEBI" id="CHEBI:71310"/>
        <dbReference type="EC" id="2.7.7.77"/>
    </reaction>
</comment>
<comment type="cofactor">
    <cofactor evidence="1">
        <name>Mg(2+)</name>
        <dbReference type="ChEBI" id="CHEBI:18420"/>
    </cofactor>
</comment>
<comment type="subcellular location">
    <subcellularLocation>
        <location evidence="1">Cytoplasm</location>
    </subcellularLocation>
</comment>
<comment type="domain">
    <text evidence="1">The N-terminal domain determines nucleotide recognition and specific binding, while the C-terminal domain determines the specific binding to the target protein.</text>
</comment>
<comment type="similarity">
    <text evidence="1">Belongs to the MobA family.</text>
</comment>
<sequence>MAELAPDTVPLAGVVLAGGESRRMGRDKATLPLPGGTTTLVEHMVGILGQRCAPVFVMAAPGQPLPTLPVPVLRDELPGLGPLPATGRGLRAAAEAGVRLAFVCAVDMPYLTVELIEDLARRAVQTDAEVVLPWDGRNHYLAAVYRTDLADRVDTLVGAGERKMSALVDASDALRIVMADSRPLTNVNSAAGLHAPMQPGR</sequence>
<evidence type="ECO:0000255" key="1">
    <source>
        <dbReference type="HAMAP-Rule" id="MF_00316"/>
    </source>
</evidence>